<dbReference type="EMBL" id="BC092186">
    <property type="protein sequence ID" value="AAH92186.1"/>
    <property type="molecule type" value="mRNA"/>
</dbReference>
<dbReference type="SMR" id="Q56A36"/>
<dbReference type="FunCoup" id="Q56A36">
    <property type="interactions" value="963"/>
</dbReference>
<dbReference type="STRING" id="7955.ENSDARP00000062985"/>
<dbReference type="PaxDb" id="7955-ENSDARP00000062985"/>
<dbReference type="AGR" id="ZFIN:ZDB-GENE-050410-3"/>
<dbReference type="ZFIN" id="ZDB-GENE-050410-3">
    <property type="gene designation" value="hsh2d"/>
</dbReference>
<dbReference type="eggNOG" id="ENOG502RZYN">
    <property type="taxonomic scope" value="Eukaryota"/>
</dbReference>
<dbReference type="InParanoid" id="Q56A36"/>
<dbReference type="PhylomeDB" id="Q56A36"/>
<dbReference type="PRO" id="PR:Q56A36"/>
<dbReference type="Proteomes" id="UP000000437">
    <property type="component" value="Unplaced"/>
</dbReference>
<dbReference type="GO" id="GO:0005737">
    <property type="term" value="C:cytoplasm"/>
    <property type="evidence" value="ECO:0000318"/>
    <property type="project" value="GO_Central"/>
</dbReference>
<dbReference type="GO" id="GO:0007165">
    <property type="term" value="P:signal transduction"/>
    <property type="evidence" value="ECO:0007669"/>
    <property type="project" value="InterPro"/>
</dbReference>
<dbReference type="CDD" id="cd09946">
    <property type="entry name" value="SH2_HSH2_like"/>
    <property type="match status" value="1"/>
</dbReference>
<dbReference type="Gene3D" id="3.30.505.10">
    <property type="entry name" value="SH2 domain"/>
    <property type="match status" value="1"/>
</dbReference>
<dbReference type="InterPro" id="IPR035047">
    <property type="entry name" value="HSH2D_SH2"/>
</dbReference>
<dbReference type="InterPro" id="IPR000980">
    <property type="entry name" value="SH2"/>
</dbReference>
<dbReference type="InterPro" id="IPR036860">
    <property type="entry name" value="SH2_dom_sf"/>
</dbReference>
<dbReference type="PANTHER" id="PTHR14388:SF3">
    <property type="entry name" value="HEMATOPOIETIC SH2 DOMAIN-CONTAINING PROTEIN"/>
    <property type="match status" value="1"/>
</dbReference>
<dbReference type="PANTHER" id="PTHR14388">
    <property type="entry name" value="T CELL-SPECIFIC ADAPTER PROTEIN TSAD"/>
    <property type="match status" value="1"/>
</dbReference>
<dbReference type="Pfam" id="PF00017">
    <property type="entry name" value="SH2"/>
    <property type="match status" value="1"/>
</dbReference>
<dbReference type="PRINTS" id="PR00401">
    <property type="entry name" value="SH2DOMAIN"/>
</dbReference>
<dbReference type="SMART" id="SM00252">
    <property type="entry name" value="SH2"/>
    <property type="match status" value="1"/>
</dbReference>
<dbReference type="SUPFAM" id="SSF55550">
    <property type="entry name" value="SH2 domain"/>
    <property type="match status" value="1"/>
</dbReference>
<dbReference type="PROSITE" id="PS50001">
    <property type="entry name" value="SH2"/>
    <property type="match status" value="1"/>
</dbReference>
<feature type="chain" id="PRO_0000233131" description="Hematopoietic SH2 domain-containing protein homolog">
    <location>
        <begin position="1"/>
        <end position="365"/>
    </location>
</feature>
<feature type="domain" description="SH2" evidence="2">
    <location>
        <begin position="34"/>
        <end position="125"/>
    </location>
</feature>
<feature type="region of interest" description="Disordered" evidence="3">
    <location>
        <begin position="199"/>
        <end position="278"/>
    </location>
</feature>
<feature type="region of interest" description="Disordered" evidence="3">
    <location>
        <begin position="335"/>
        <end position="365"/>
    </location>
</feature>
<feature type="compositionally biased region" description="Polar residues" evidence="3">
    <location>
        <begin position="257"/>
        <end position="277"/>
    </location>
</feature>
<proteinExistence type="evidence at transcript level"/>
<keyword id="KW-1185">Reference proteome</keyword>
<keyword id="KW-0727">SH2 domain</keyword>
<protein>
    <recommendedName>
        <fullName>Hematopoietic SH2 domain-containing protein homolog</fullName>
    </recommendedName>
</protein>
<reference key="1">
    <citation type="submission" date="2005-03" db="EMBL/GenBank/DDBJ databases">
        <authorList>
            <consortium name="NIH - Zebrafish Gene Collection (ZGC) project"/>
        </authorList>
    </citation>
    <scope>NUCLEOTIDE SEQUENCE [LARGE SCALE MRNA]</scope>
    <source>
        <strain>AB</strain>
        <tissue>Embryo</tissue>
    </source>
</reference>
<evidence type="ECO:0000250" key="1"/>
<evidence type="ECO:0000255" key="2">
    <source>
        <dbReference type="PROSITE-ProRule" id="PRU00191"/>
    </source>
</evidence>
<evidence type="ECO:0000256" key="3">
    <source>
        <dbReference type="SAM" id="MobiDB-lite"/>
    </source>
</evidence>
<accession>Q56A36</accession>
<name>HSH2D_DANRE</name>
<organism>
    <name type="scientific">Danio rerio</name>
    <name type="common">Zebrafish</name>
    <name type="synonym">Brachydanio rerio</name>
    <dbReference type="NCBI Taxonomy" id="7955"/>
    <lineage>
        <taxon>Eukaryota</taxon>
        <taxon>Metazoa</taxon>
        <taxon>Chordata</taxon>
        <taxon>Craniata</taxon>
        <taxon>Vertebrata</taxon>
        <taxon>Euteleostomi</taxon>
        <taxon>Actinopterygii</taxon>
        <taxon>Neopterygii</taxon>
        <taxon>Teleostei</taxon>
        <taxon>Ostariophysi</taxon>
        <taxon>Cypriniformes</taxon>
        <taxon>Danionidae</taxon>
        <taxon>Danioninae</taxon>
        <taxon>Danio</taxon>
    </lineage>
</organism>
<sequence>MAVPLPNDSSNAAFSWFTEYQRSCILENGVVPEWFHGIISRKAAEEMLMCKPAGYFLIRVSESRVGYTLSYRAEDRCRHFMINVLPDNQFMIVGEKTVYCSLHDLVAFHRRCPILPYNELLTVACEQGGKTNYVELLFPQKKDVSHRQVEWISSSTATNTLQSNISEENQTSQLQNNSTSHPGRLYPSLETEVSALNIQSTDQPTKPVPKPRTVFASKTPAEETPPQLPPRMRLPSRLQTSTEDRSQGLMPVIPDRQQITPNTPNEGRTQQKNQQQKPVVMSLVHIKKKLKKKRSEDHTYEEIAGGLFQKDATSALESINTNVEGLVENDYQELAEHPISDGIPKSSDRNLPVEYRHPPPFAPGY</sequence>
<gene>
    <name type="primary">hsh2d</name>
</gene>
<comment type="function">
    <text evidence="1">May be an adapter protein involved in tyrosine kinase signaling.</text>
</comment>